<accession>B0SPT5</accession>
<comment type="function">
    <text evidence="1">Nucleotide-binding protein.</text>
</comment>
<comment type="similarity">
    <text evidence="1">Belongs to the YajQ family.</text>
</comment>
<feature type="chain" id="PRO_1000130635" description="Nucleotide-binding protein LEPBI_I1392">
    <location>
        <begin position="1"/>
        <end position="165"/>
    </location>
</feature>
<proteinExistence type="inferred from homology"/>
<gene>
    <name type="ordered locus">LEPBI_I1392</name>
</gene>
<name>Y1392_LEPBP</name>
<keyword id="KW-0547">Nucleotide-binding</keyword>
<keyword id="KW-1185">Reference proteome</keyword>
<reference key="1">
    <citation type="journal article" date="2008" name="PLoS ONE">
        <title>Genome sequence of the saprophyte Leptospira biflexa provides insights into the evolution of Leptospira and the pathogenesis of leptospirosis.</title>
        <authorList>
            <person name="Picardeau M."/>
            <person name="Bulach D.M."/>
            <person name="Bouchier C."/>
            <person name="Zuerner R.L."/>
            <person name="Zidane N."/>
            <person name="Wilson P.J."/>
            <person name="Creno S."/>
            <person name="Kuczek E.S."/>
            <person name="Bommezzadri S."/>
            <person name="Davis J.C."/>
            <person name="McGrath A."/>
            <person name="Johnson M.J."/>
            <person name="Boursaux-Eude C."/>
            <person name="Seemann T."/>
            <person name="Rouy Z."/>
            <person name="Coppel R.L."/>
            <person name="Rood J.I."/>
            <person name="Lajus A."/>
            <person name="Davies J.K."/>
            <person name="Medigue C."/>
            <person name="Adler B."/>
        </authorList>
    </citation>
    <scope>NUCLEOTIDE SEQUENCE [LARGE SCALE GENOMIC DNA]</scope>
    <source>
        <strain>Patoc 1 / ATCC 23582 / Paris</strain>
    </source>
</reference>
<dbReference type="EMBL" id="CP000786">
    <property type="protein sequence ID" value="ABZ97501.1"/>
    <property type="molecule type" value="Genomic_DNA"/>
</dbReference>
<dbReference type="RefSeq" id="WP_012388381.1">
    <property type="nucleotide sequence ID" value="NC_010602.1"/>
</dbReference>
<dbReference type="SMR" id="B0SPT5"/>
<dbReference type="STRING" id="456481.LEPBI_I1392"/>
<dbReference type="KEGG" id="lbi:LEPBI_I1392"/>
<dbReference type="HOGENOM" id="CLU_099839_1_0_12"/>
<dbReference type="OrthoDB" id="9801447at2"/>
<dbReference type="BioCyc" id="LBIF456481:LEPBI_RS06825-MONOMER"/>
<dbReference type="Proteomes" id="UP000001847">
    <property type="component" value="Chromosome I"/>
</dbReference>
<dbReference type="GO" id="GO:0005829">
    <property type="term" value="C:cytosol"/>
    <property type="evidence" value="ECO:0007669"/>
    <property type="project" value="TreeGrafter"/>
</dbReference>
<dbReference type="GO" id="GO:0000166">
    <property type="term" value="F:nucleotide binding"/>
    <property type="evidence" value="ECO:0007669"/>
    <property type="project" value="TreeGrafter"/>
</dbReference>
<dbReference type="CDD" id="cd11740">
    <property type="entry name" value="YajQ_like"/>
    <property type="match status" value="1"/>
</dbReference>
<dbReference type="FunFam" id="3.30.70.990:FF:000002">
    <property type="entry name" value="UPF0234 protein LEP1GSC067_4943"/>
    <property type="match status" value="1"/>
</dbReference>
<dbReference type="Gene3D" id="3.30.70.860">
    <property type="match status" value="1"/>
</dbReference>
<dbReference type="Gene3D" id="3.30.70.990">
    <property type="entry name" value="YajQ-like, domain 2"/>
    <property type="match status" value="1"/>
</dbReference>
<dbReference type="HAMAP" id="MF_00632">
    <property type="entry name" value="YajQ"/>
    <property type="match status" value="1"/>
</dbReference>
<dbReference type="InterPro" id="IPR007551">
    <property type="entry name" value="DUF520"/>
</dbReference>
<dbReference type="InterPro" id="IPR035571">
    <property type="entry name" value="UPF0234-like_C"/>
</dbReference>
<dbReference type="InterPro" id="IPR035570">
    <property type="entry name" value="UPF0234_N"/>
</dbReference>
<dbReference type="InterPro" id="IPR036183">
    <property type="entry name" value="YajQ-like_sf"/>
</dbReference>
<dbReference type="NCBIfam" id="NF003819">
    <property type="entry name" value="PRK05412.1"/>
    <property type="match status" value="1"/>
</dbReference>
<dbReference type="PANTHER" id="PTHR30476">
    <property type="entry name" value="UPF0234 PROTEIN YAJQ"/>
    <property type="match status" value="1"/>
</dbReference>
<dbReference type="PANTHER" id="PTHR30476:SF0">
    <property type="entry name" value="UPF0234 PROTEIN YAJQ"/>
    <property type="match status" value="1"/>
</dbReference>
<dbReference type="Pfam" id="PF04461">
    <property type="entry name" value="DUF520"/>
    <property type="match status" value="1"/>
</dbReference>
<dbReference type="SUPFAM" id="SSF89963">
    <property type="entry name" value="YajQ-like"/>
    <property type="match status" value="2"/>
</dbReference>
<organism>
    <name type="scientific">Leptospira biflexa serovar Patoc (strain Patoc 1 / ATCC 23582 / Paris)</name>
    <dbReference type="NCBI Taxonomy" id="456481"/>
    <lineage>
        <taxon>Bacteria</taxon>
        <taxon>Pseudomonadati</taxon>
        <taxon>Spirochaetota</taxon>
        <taxon>Spirochaetia</taxon>
        <taxon>Leptospirales</taxon>
        <taxon>Leptospiraceae</taxon>
        <taxon>Leptospira</taxon>
    </lineage>
</organism>
<protein>
    <recommendedName>
        <fullName evidence="1">Nucleotide-binding protein LEPBI_I1392</fullName>
    </recommendedName>
</protein>
<evidence type="ECO:0000255" key="1">
    <source>
        <dbReference type="HAMAP-Rule" id="MF_00632"/>
    </source>
</evidence>
<sequence>MAQDPSFDIVSKLERPELQNAVSQAMTEIQTRFDFKGSNSEIKITDDQLVLTSENEIKLKQVIDVLTTKMAKRGIGLKAFDFDSKVESATGQTVRMKVKIQNGLDKEQTKQITTLIKDQKLKVQATIQGDSVRVVGKKKDDLQEVMAAIRNANFNFDANFTNFKG</sequence>